<organism>
    <name type="scientific">Arabidopsis thaliana</name>
    <name type="common">Mouse-ear cress</name>
    <dbReference type="NCBI Taxonomy" id="3702"/>
    <lineage>
        <taxon>Eukaryota</taxon>
        <taxon>Viridiplantae</taxon>
        <taxon>Streptophyta</taxon>
        <taxon>Embryophyta</taxon>
        <taxon>Tracheophyta</taxon>
        <taxon>Spermatophyta</taxon>
        <taxon>Magnoliopsida</taxon>
        <taxon>eudicotyledons</taxon>
        <taxon>Gunneridae</taxon>
        <taxon>Pentapetalae</taxon>
        <taxon>rosids</taxon>
        <taxon>malvids</taxon>
        <taxon>Brassicales</taxon>
        <taxon>Brassicaceae</taxon>
        <taxon>Camelineae</taxon>
        <taxon>Arabidopsis</taxon>
    </lineage>
</organism>
<keyword id="KW-0067">ATP-binding</keyword>
<keyword id="KW-0418">Kinase</keyword>
<keyword id="KW-0472">Membrane</keyword>
<keyword id="KW-0547">Nucleotide-binding</keyword>
<keyword id="KW-0539">Nucleus</keyword>
<keyword id="KW-1185">Reference proteome</keyword>
<keyword id="KW-0677">Repeat</keyword>
<keyword id="KW-0808">Transferase</keyword>
<dbReference type="EC" id="2.7.1.68"/>
<dbReference type="EMBL" id="AJ810853">
    <property type="protein sequence ID" value="CAH18644.1"/>
    <property type="molecule type" value="mRNA"/>
</dbReference>
<dbReference type="EMBL" id="AC015985">
    <property type="protein sequence ID" value="AAF23244.1"/>
    <property type="molecule type" value="Genomic_DNA"/>
</dbReference>
<dbReference type="EMBL" id="CP002686">
    <property type="protein sequence ID" value="AEE74832.1"/>
    <property type="molecule type" value="Genomic_DNA"/>
</dbReference>
<dbReference type="EMBL" id="CP002686">
    <property type="protein sequence ID" value="AEE74833.1"/>
    <property type="molecule type" value="Genomic_DNA"/>
</dbReference>
<dbReference type="EMBL" id="CP002686">
    <property type="protein sequence ID" value="AEE74834.1"/>
    <property type="molecule type" value="Genomic_DNA"/>
</dbReference>
<dbReference type="EMBL" id="CP002686">
    <property type="protein sequence ID" value="ANM65698.1"/>
    <property type="molecule type" value="Genomic_DNA"/>
</dbReference>
<dbReference type="EMBL" id="AY120742">
    <property type="protein sequence ID" value="AAM53300.1"/>
    <property type="molecule type" value="mRNA"/>
</dbReference>
<dbReference type="EMBL" id="AK229815">
    <property type="protein sequence ID" value="BAF01646.1"/>
    <property type="molecule type" value="mRNA"/>
</dbReference>
<dbReference type="RefSeq" id="NP_001030666.1">
    <property type="nucleotide sequence ID" value="NM_001035589.3"/>
</dbReference>
<dbReference type="RefSeq" id="NP_001189852.1">
    <property type="nucleotide sequence ID" value="NM_001202923.1"/>
</dbReference>
<dbReference type="RefSeq" id="NP_001327647.1">
    <property type="nucleotide sequence ID" value="NM_001337850.1"/>
</dbReference>
<dbReference type="RefSeq" id="NP_187603.1">
    <property type="nucleotide sequence ID" value="NM_111827.3"/>
</dbReference>
<dbReference type="SMR" id="Q8L850"/>
<dbReference type="BioGRID" id="5485">
    <property type="interactions" value="1"/>
</dbReference>
<dbReference type="FunCoup" id="Q8L850">
    <property type="interactions" value="2908"/>
</dbReference>
<dbReference type="IntAct" id="Q8L850">
    <property type="interactions" value="1"/>
</dbReference>
<dbReference type="STRING" id="3702.Q8L850"/>
<dbReference type="iPTMnet" id="Q8L850"/>
<dbReference type="PaxDb" id="3702-AT3G09920.3"/>
<dbReference type="ProteomicsDB" id="234754"/>
<dbReference type="EnsemblPlants" id="AT3G09920.1">
    <property type="protein sequence ID" value="AT3G09920.1"/>
    <property type="gene ID" value="AT3G09920"/>
</dbReference>
<dbReference type="EnsemblPlants" id="AT3G09920.2">
    <property type="protein sequence ID" value="AT3G09920.2"/>
    <property type="gene ID" value="AT3G09920"/>
</dbReference>
<dbReference type="EnsemblPlants" id="AT3G09920.3">
    <property type="protein sequence ID" value="AT3G09920.3"/>
    <property type="gene ID" value="AT3G09920"/>
</dbReference>
<dbReference type="EnsemblPlants" id="AT3G09920.4">
    <property type="protein sequence ID" value="AT3G09920.4"/>
    <property type="gene ID" value="AT3G09920"/>
</dbReference>
<dbReference type="GeneID" id="820151"/>
<dbReference type="Gramene" id="AT3G09920.1">
    <property type="protein sequence ID" value="AT3G09920.1"/>
    <property type="gene ID" value="AT3G09920"/>
</dbReference>
<dbReference type="Gramene" id="AT3G09920.2">
    <property type="protein sequence ID" value="AT3G09920.2"/>
    <property type="gene ID" value="AT3G09920"/>
</dbReference>
<dbReference type="Gramene" id="AT3G09920.3">
    <property type="protein sequence ID" value="AT3G09920.3"/>
    <property type="gene ID" value="AT3G09920"/>
</dbReference>
<dbReference type="Gramene" id="AT3G09920.4">
    <property type="protein sequence ID" value="AT3G09920.4"/>
    <property type="gene ID" value="AT3G09920"/>
</dbReference>
<dbReference type="KEGG" id="ath:AT3G09920"/>
<dbReference type="Araport" id="AT3G09920"/>
<dbReference type="TAIR" id="AT3G09920">
    <property type="gene designation" value="PIP5K9"/>
</dbReference>
<dbReference type="eggNOG" id="KOG0229">
    <property type="taxonomic scope" value="Eukaryota"/>
</dbReference>
<dbReference type="HOGENOM" id="CLU_004312_6_4_1"/>
<dbReference type="InParanoid" id="Q8L850"/>
<dbReference type="OMA" id="PPHEMAG"/>
<dbReference type="PhylomeDB" id="Q8L850"/>
<dbReference type="BioCyc" id="ARA:AT3G09920-MONOMER"/>
<dbReference type="BRENDA" id="2.7.1.68">
    <property type="organism ID" value="399"/>
</dbReference>
<dbReference type="PRO" id="PR:Q8L850"/>
<dbReference type="Proteomes" id="UP000006548">
    <property type="component" value="Chromosome 3"/>
</dbReference>
<dbReference type="ExpressionAtlas" id="Q8L850">
    <property type="expression patterns" value="baseline and differential"/>
</dbReference>
<dbReference type="GO" id="GO:0005829">
    <property type="term" value="C:cytosol"/>
    <property type="evidence" value="ECO:0000314"/>
    <property type="project" value="TAIR"/>
</dbReference>
<dbReference type="GO" id="GO:0016020">
    <property type="term" value="C:membrane"/>
    <property type="evidence" value="ECO:0000314"/>
    <property type="project" value="TAIR"/>
</dbReference>
<dbReference type="GO" id="GO:0005634">
    <property type="term" value="C:nucleus"/>
    <property type="evidence" value="ECO:0000314"/>
    <property type="project" value="TAIR"/>
</dbReference>
<dbReference type="GO" id="GO:0016308">
    <property type="term" value="F:1-phosphatidylinositol-4-phosphate 5-kinase activity"/>
    <property type="evidence" value="ECO:0007669"/>
    <property type="project" value="UniProtKB-EC"/>
</dbReference>
<dbReference type="GO" id="GO:0005524">
    <property type="term" value="F:ATP binding"/>
    <property type="evidence" value="ECO:0007669"/>
    <property type="project" value="UniProtKB-KW"/>
</dbReference>
<dbReference type="GO" id="GO:0006520">
    <property type="term" value="P:amino acid metabolic process"/>
    <property type="evidence" value="ECO:0000315"/>
    <property type="project" value="TAIR"/>
</dbReference>
<dbReference type="GO" id="GO:0005975">
    <property type="term" value="P:carbohydrate metabolic process"/>
    <property type="evidence" value="ECO:0000315"/>
    <property type="project" value="TAIR"/>
</dbReference>
<dbReference type="GO" id="GO:0046488">
    <property type="term" value="P:phosphatidylinositol metabolic process"/>
    <property type="evidence" value="ECO:0007669"/>
    <property type="project" value="InterPro"/>
</dbReference>
<dbReference type="CDD" id="cd17302">
    <property type="entry name" value="PIPKc_AtPIP5K_like"/>
    <property type="match status" value="1"/>
</dbReference>
<dbReference type="FunFam" id="2.20.110.10:FF:000028">
    <property type="entry name" value="Phosphatidylinositol 4-phosphate 5-kinase"/>
    <property type="match status" value="1"/>
</dbReference>
<dbReference type="FunFam" id="3.30.800.10:FF:000003">
    <property type="entry name" value="Phosphatidylinositol 4-phosphate 5-kinase"/>
    <property type="match status" value="1"/>
</dbReference>
<dbReference type="Gene3D" id="3.30.810.10">
    <property type="entry name" value="2-Layer Sandwich"/>
    <property type="match status" value="1"/>
</dbReference>
<dbReference type="Gene3D" id="2.20.110.10">
    <property type="entry name" value="Histone H3 K4-specific methyltransferase SET7/9 N-terminal domain"/>
    <property type="match status" value="2"/>
</dbReference>
<dbReference type="Gene3D" id="3.30.800.10">
    <property type="entry name" value="Phosphatidylinositol Phosphate Kinase II Beta"/>
    <property type="match status" value="1"/>
</dbReference>
<dbReference type="InterPro" id="IPR003409">
    <property type="entry name" value="MORN"/>
</dbReference>
<dbReference type="InterPro" id="IPR017163">
    <property type="entry name" value="PIno-4-P-5_kinase_pln"/>
</dbReference>
<dbReference type="InterPro" id="IPR027483">
    <property type="entry name" value="PInositol-4-P-4/5-kinase_C_sf"/>
</dbReference>
<dbReference type="InterPro" id="IPR002498">
    <property type="entry name" value="PInositol-4-P-4/5-kinase_core"/>
</dbReference>
<dbReference type="InterPro" id="IPR027484">
    <property type="entry name" value="PInositol-4-P-5-kinase_N"/>
</dbReference>
<dbReference type="InterPro" id="IPR023610">
    <property type="entry name" value="PInositol-4/5-P-5/4-kinase"/>
</dbReference>
<dbReference type="PANTHER" id="PTHR23086:SF8">
    <property type="entry name" value="PHOSPHATIDYLINOSITOL 5-PHOSPHATE 4-KINASE, ISOFORM A"/>
    <property type="match status" value="1"/>
</dbReference>
<dbReference type="PANTHER" id="PTHR23086">
    <property type="entry name" value="PHOSPHATIDYLINOSITOL-4-PHOSPHATE 5-KINASE"/>
    <property type="match status" value="1"/>
</dbReference>
<dbReference type="Pfam" id="PF02493">
    <property type="entry name" value="MORN"/>
    <property type="match status" value="8"/>
</dbReference>
<dbReference type="Pfam" id="PF01504">
    <property type="entry name" value="PIP5K"/>
    <property type="match status" value="1"/>
</dbReference>
<dbReference type="PIRSF" id="PIRSF037274">
    <property type="entry name" value="PIP5K_plant_prd"/>
    <property type="match status" value="1"/>
</dbReference>
<dbReference type="SMART" id="SM00698">
    <property type="entry name" value="MORN"/>
    <property type="match status" value="8"/>
</dbReference>
<dbReference type="SMART" id="SM00330">
    <property type="entry name" value="PIPKc"/>
    <property type="match status" value="1"/>
</dbReference>
<dbReference type="SUPFAM" id="SSF82185">
    <property type="entry name" value="Histone H3 K4-specific methyltransferase SET7/9 N-terminal domain"/>
    <property type="match status" value="2"/>
</dbReference>
<dbReference type="SUPFAM" id="SSF56104">
    <property type="entry name" value="SAICAR synthase-like"/>
    <property type="match status" value="1"/>
</dbReference>
<dbReference type="PROSITE" id="PS51455">
    <property type="entry name" value="PIPK"/>
    <property type="match status" value="1"/>
</dbReference>
<gene>
    <name type="primary">PIP5K9</name>
    <name type="ordered locus">At3g09920</name>
    <name type="ORF">F8A24.2</name>
</gene>
<feature type="chain" id="PRO_0000185481" description="Phosphatidylinositol 4-phosphate 5-kinase 9">
    <location>
        <begin position="1"/>
        <end position="815"/>
    </location>
</feature>
<feature type="repeat" description="MORN 1">
    <location>
        <begin position="58"/>
        <end position="80"/>
    </location>
</feature>
<feature type="repeat" description="MORN 2">
    <location>
        <begin position="81"/>
        <end position="103"/>
    </location>
</feature>
<feature type="repeat" description="MORN 3">
    <location>
        <begin position="104"/>
        <end position="126"/>
    </location>
</feature>
<feature type="repeat" description="MORN 4">
    <location>
        <begin position="127"/>
        <end position="149"/>
    </location>
</feature>
<feature type="repeat" description="MORN 5">
    <location>
        <begin position="150"/>
        <end position="172"/>
    </location>
</feature>
<feature type="repeat" description="MORN 6">
    <location>
        <begin position="173"/>
        <end position="195"/>
    </location>
</feature>
<feature type="repeat" description="MORN 7">
    <location>
        <begin position="196"/>
        <end position="218"/>
    </location>
</feature>
<feature type="repeat" description="MORN 8">
    <location>
        <begin position="219"/>
        <end position="240"/>
    </location>
</feature>
<feature type="domain" description="PIPK" evidence="2">
    <location>
        <begin position="391"/>
        <end position="809"/>
    </location>
</feature>
<feature type="region of interest" description="Activation loop" evidence="1">
    <location>
        <begin position="769"/>
        <end position="790"/>
    </location>
</feature>
<feature type="sequence conflict" description="In Ref. 4; AAM53300." evidence="4" ref="4">
    <original>N</original>
    <variation>K</variation>
    <location>
        <position position="482"/>
    </location>
</feature>
<protein>
    <recommendedName>
        <fullName>Phosphatidylinositol 4-phosphate 5-kinase 9</fullName>
        <shortName>AtPIP5K9</shortName>
        <ecNumber>2.7.1.68</ecNumber>
    </recommendedName>
    <alternativeName>
        <fullName>1-phosphatidylinositol 4-phosphate kinase 9</fullName>
    </alternativeName>
    <alternativeName>
        <fullName>Diphosphoinositide kinase 9</fullName>
    </alternativeName>
    <alternativeName>
        <fullName>PtdIns(4)P-5-kinase 9</fullName>
    </alternativeName>
</protein>
<evidence type="ECO:0000250" key="1"/>
<evidence type="ECO:0000255" key="2">
    <source>
        <dbReference type="PROSITE-ProRule" id="PRU00781"/>
    </source>
</evidence>
<evidence type="ECO:0000269" key="3">
    <source>
    </source>
</evidence>
<evidence type="ECO:0000305" key="4"/>
<evidence type="ECO:0000305" key="5">
    <source>
    </source>
</evidence>
<proteinExistence type="evidence at protein level"/>
<sequence>MSGLDVRGAVSFAERTKSVDALTKKEILSALNSGEVSETSEDARFRVRELVLPDGESYSGSLLGNVPEGPGKYIWSDGCVYDGEWRRGMRHGIGNMRWASGASYDGEFSGGYMHGSGTYVDANKLTYKGRWRLNLKHGLGYQVYPNGDVFEGSWIQGLGEGPGKYTWANKNVYLGDMKGGKMSGKGTLTWVTGDSYEGSWLNGMMHGVGVYTWSDGGCYVGTWTRGLKDGKGSFYSAGTRVPVVQEFYLNALRKRGVLPDMRRQNQVASSVNMENLRVGVNRNKLSKGSLINLEQSRNGRVSLERRWSLEVSIEKVIGHGYSDLSTAVLDSGSSVQYKANIPILEREYMQGVLISELVVNNGFSRTSRRAKRKHKRLVKEAKKPGEVVIKGHRSYDLMLSLQLGIRYTVGKITPIQRRQVRTADFGPRASFWMTFPRAGSTMTPPHHSEDFKWKDYCPMVFRNLREMFKIDAADYMMSICGNDTLRELSSPGKSGSVFFLSQDDRFMIKTLRKSEVKVLLRMLPDYHHHVKTYENTLITKFFGLHRIKPSSGQKFRFVVMGNMFFTDLRIHRRFDLKGSSLGRSADKVEIDENTILKDLDLNYSFFLETSWREGLLRQLEIDSKFLEAQNIMDYSLLLGVHHRAPQHLRSQLVRSQSITTDALESVAEDDTIEDDMLSYHEGLVLVPRGSENTVTGPHIRGSRLRASAVGDEEVDLLLPGTARLQIQQGVNMPARAELIPGREDKEKQILHDCCDVVLYLGIIDILQEYNMTKKIEHAYKSLHFDSLSISAVDPTFYSQRFLEFIKKVFPQNNKS</sequence>
<name>PI5K9_ARATH</name>
<comment type="function">
    <text evidence="3">Plays a role in sugar-mediated root development. Interaction with CINV1 induces repression of CINV1 activity and negative regulation of sugar-mediated root cell elongation.</text>
</comment>
<comment type="catalytic activity">
    <reaction>
        <text>a 1,2-diacyl-sn-glycero-3-phospho-(1D-myo-inositol 4-phosphate) + ATP = a 1,2-diacyl-sn-glycero-3-phospho-(1D-myo-inositol-4,5-bisphosphate) + ADP + H(+)</text>
        <dbReference type="Rhea" id="RHEA:14425"/>
        <dbReference type="ChEBI" id="CHEBI:15378"/>
        <dbReference type="ChEBI" id="CHEBI:30616"/>
        <dbReference type="ChEBI" id="CHEBI:58178"/>
        <dbReference type="ChEBI" id="CHEBI:58456"/>
        <dbReference type="ChEBI" id="CHEBI:456216"/>
        <dbReference type="EC" id="2.7.1.68"/>
    </reaction>
</comment>
<comment type="subunit">
    <text evidence="3">Interacts with CINV1.</text>
</comment>
<comment type="interaction">
    <interactant intactId="EBI-2008013">
        <id>Q8L850</id>
    </interactant>
    <interactant intactId="EBI-2008033">
        <id>Q9LQF2</id>
        <label>CINV1</label>
    </interactant>
    <organismsDiffer>false</organismsDiffer>
    <experiments>6</experiments>
</comment>
<comment type="subcellular location">
    <subcellularLocation>
        <location evidence="4">Membrane</location>
        <topology evidence="4">Peripheral membrane protein</topology>
    </subcellularLocation>
    <subcellularLocation>
        <location>Nucleus</location>
    </subcellularLocation>
</comment>
<comment type="tissue specificity">
    <text evidence="3">Widely expressed.</text>
</comment>
<comment type="induction">
    <text evidence="3">Transiently down-regulated by cold.</text>
</comment>
<comment type="miscellaneous">
    <text evidence="5">The gain-of-function mutant pip5k9-d (T-DNA insertion line) has reduced primary root length.</text>
</comment>
<accession>Q8L850</accession>
<accession>Q0WMK5</accession>
<accession>Q9SF93</accession>
<reference key="1">
    <citation type="submission" date="2004-08" db="EMBL/GenBank/DDBJ databases">
        <title>Arabidopsis thaliana putative phosphatidylinositol-4-phosphate 5-kinase.</title>
        <authorList>
            <person name="Lou Y."/>
        </authorList>
    </citation>
    <scope>NUCLEOTIDE SEQUENCE [MRNA]</scope>
</reference>
<reference key="2">
    <citation type="journal article" date="2000" name="Nature">
        <title>Sequence and analysis of chromosome 3 of the plant Arabidopsis thaliana.</title>
        <authorList>
            <person name="Salanoubat M."/>
            <person name="Lemcke K."/>
            <person name="Rieger M."/>
            <person name="Ansorge W."/>
            <person name="Unseld M."/>
            <person name="Fartmann B."/>
            <person name="Valle G."/>
            <person name="Bloecker H."/>
            <person name="Perez-Alonso M."/>
            <person name="Obermaier B."/>
            <person name="Delseny M."/>
            <person name="Boutry M."/>
            <person name="Grivell L.A."/>
            <person name="Mache R."/>
            <person name="Puigdomenech P."/>
            <person name="De Simone V."/>
            <person name="Choisne N."/>
            <person name="Artiguenave F."/>
            <person name="Robert C."/>
            <person name="Brottier P."/>
            <person name="Wincker P."/>
            <person name="Cattolico L."/>
            <person name="Weissenbach J."/>
            <person name="Saurin W."/>
            <person name="Quetier F."/>
            <person name="Schaefer M."/>
            <person name="Mueller-Auer S."/>
            <person name="Gabel C."/>
            <person name="Fuchs M."/>
            <person name="Benes V."/>
            <person name="Wurmbach E."/>
            <person name="Drzonek H."/>
            <person name="Erfle H."/>
            <person name="Jordan N."/>
            <person name="Bangert S."/>
            <person name="Wiedelmann R."/>
            <person name="Kranz H."/>
            <person name="Voss H."/>
            <person name="Holland R."/>
            <person name="Brandt P."/>
            <person name="Nyakatura G."/>
            <person name="Vezzi A."/>
            <person name="D'Angelo M."/>
            <person name="Pallavicini A."/>
            <person name="Toppo S."/>
            <person name="Simionati B."/>
            <person name="Conrad A."/>
            <person name="Hornischer K."/>
            <person name="Kauer G."/>
            <person name="Loehnert T.-H."/>
            <person name="Nordsiek G."/>
            <person name="Reichelt J."/>
            <person name="Scharfe M."/>
            <person name="Schoen O."/>
            <person name="Bargues M."/>
            <person name="Terol J."/>
            <person name="Climent J."/>
            <person name="Navarro P."/>
            <person name="Collado C."/>
            <person name="Perez-Perez A."/>
            <person name="Ottenwaelder B."/>
            <person name="Duchemin D."/>
            <person name="Cooke R."/>
            <person name="Laudie M."/>
            <person name="Berger-Llauro C."/>
            <person name="Purnelle B."/>
            <person name="Masuy D."/>
            <person name="de Haan M."/>
            <person name="Maarse A.C."/>
            <person name="Alcaraz J.-P."/>
            <person name="Cottet A."/>
            <person name="Casacuberta E."/>
            <person name="Monfort A."/>
            <person name="Argiriou A."/>
            <person name="Flores M."/>
            <person name="Liguori R."/>
            <person name="Vitale D."/>
            <person name="Mannhaupt G."/>
            <person name="Haase D."/>
            <person name="Schoof H."/>
            <person name="Rudd S."/>
            <person name="Zaccaria P."/>
            <person name="Mewes H.-W."/>
            <person name="Mayer K.F.X."/>
            <person name="Kaul S."/>
            <person name="Town C.D."/>
            <person name="Koo H.L."/>
            <person name="Tallon L.J."/>
            <person name="Jenkins J."/>
            <person name="Rooney T."/>
            <person name="Rizzo M."/>
            <person name="Walts A."/>
            <person name="Utterback T."/>
            <person name="Fujii C.Y."/>
            <person name="Shea T.P."/>
            <person name="Creasy T.H."/>
            <person name="Haas B."/>
            <person name="Maiti R."/>
            <person name="Wu D."/>
            <person name="Peterson J."/>
            <person name="Van Aken S."/>
            <person name="Pai G."/>
            <person name="Militscher J."/>
            <person name="Sellers P."/>
            <person name="Gill J.E."/>
            <person name="Feldblyum T.V."/>
            <person name="Preuss D."/>
            <person name="Lin X."/>
            <person name="Nierman W.C."/>
            <person name="Salzberg S.L."/>
            <person name="White O."/>
            <person name="Venter J.C."/>
            <person name="Fraser C.M."/>
            <person name="Kaneko T."/>
            <person name="Nakamura Y."/>
            <person name="Sato S."/>
            <person name="Kato T."/>
            <person name="Asamizu E."/>
            <person name="Sasamoto S."/>
            <person name="Kimura T."/>
            <person name="Idesawa K."/>
            <person name="Kawashima K."/>
            <person name="Kishida Y."/>
            <person name="Kiyokawa C."/>
            <person name="Kohara M."/>
            <person name="Matsumoto M."/>
            <person name="Matsuno A."/>
            <person name="Muraki A."/>
            <person name="Nakayama S."/>
            <person name="Nakazaki N."/>
            <person name="Shinpo S."/>
            <person name="Takeuchi C."/>
            <person name="Wada T."/>
            <person name="Watanabe A."/>
            <person name="Yamada M."/>
            <person name="Yasuda M."/>
            <person name="Tabata S."/>
        </authorList>
    </citation>
    <scope>NUCLEOTIDE SEQUENCE [LARGE SCALE GENOMIC DNA]</scope>
    <source>
        <strain>cv. Columbia</strain>
    </source>
</reference>
<reference key="3">
    <citation type="journal article" date="2017" name="Plant J.">
        <title>Araport11: a complete reannotation of the Arabidopsis thaliana reference genome.</title>
        <authorList>
            <person name="Cheng C.Y."/>
            <person name="Krishnakumar V."/>
            <person name="Chan A.P."/>
            <person name="Thibaud-Nissen F."/>
            <person name="Schobel S."/>
            <person name="Town C.D."/>
        </authorList>
    </citation>
    <scope>GENOME REANNOTATION</scope>
    <source>
        <strain>cv. Columbia</strain>
    </source>
</reference>
<reference key="4">
    <citation type="journal article" date="2003" name="Science">
        <title>Empirical analysis of transcriptional activity in the Arabidopsis genome.</title>
        <authorList>
            <person name="Yamada K."/>
            <person name="Lim J."/>
            <person name="Dale J.M."/>
            <person name="Chen H."/>
            <person name="Shinn P."/>
            <person name="Palm C.J."/>
            <person name="Southwick A.M."/>
            <person name="Wu H.C."/>
            <person name="Kim C.J."/>
            <person name="Nguyen M."/>
            <person name="Pham P.K."/>
            <person name="Cheuk R.F."/>
            <person name="Karlin-Newmann G."/>
            <person name="Liu S.X."/>
            <person name="Lam B."/>
            <person name="Sakano H."/>
            <person name="Wu T."/>
            <person name="Yu G."/>
            <person name="Miranda M."/>
            <person name="Quach H.L."/>
            <person name="Tripp M."/>
            <person name="Chang C.H."/>
            <person name="Lee J.M."/>
            <person name="Toriumi M.J."/>
            <person name="Chan M.M."/>
            <person name="Tang C.C."/>
            <person name="Onodera C.S."/>
            <person name="Deng J.M."/>
            <person name="Akiyama K."/>
            <person name="Ansari Y."/>
            <person name="Arakawa T."/>
            <person name="Banh J."/>
            <person name="Banno F."/>
            <person name="Bowser L."/>
            <person name="Brooks S.Y."/>
            <person name="Carninci P."/>
            <person name="Chao Q."/>
            <person name="Choy N."/>
            <person name="Enju A."/>
            <person name="Goldsmith A.D."/>
            <person name="Gurjal M."/>
            <person name="Hansen N.F."/>
            <person name="Hayashizaki Y."/>
            <person name="Johnson-Hopson C."/>
            <person name="Hsuan V.W."/>
            <person name="Iida K."/>
            <person name="Karnes M."/>
            <person name="Khan S."/>
            <person name="Koesema E."/>
            <person name="Ishida J."/>
            <person name="Jiang P.X."/>
            <person name="Jones T."/>
            <person name="Kawai J."/>
            <person name="Kamiya A."/>
            <person name="Meyers C."/>
            <person name="Nakajima M."/>
            <person name="Narusaka M."/>
            <person name="Seki M."/>
            <person name="Sakurai T."/>
            <person name="Satou M."/>
            <person name="Tamse R."/>
            <person name="Vaysberg M."/>
            <person name="Wallender E.K."/>
            <person name="Wong C."/>
            <person name="Yamamura Y."/>
            <person name="Yuan S."/>
            <person name="Shinozaki K."/>
            <person name="Davis R.W."/>
            <person name="Theologis A."/>
            <person name="Ecker J.R."/>
        </authorList>
    </citation>
    <scope>NUCLEOTIDE SEQUENCE [LARGE SCALE MRNA]</scope>
    <source>
        <strain>cv. Columbia</strain>
    </source>
</reference>
<reference key="5">
    <citation type="submission" date="2006-07" db="EMBL/GenBank/DDBJ databases">
        <title>Large-scale analysis of RIKEN Arabidopsis full-length (RAFL) cDNAs.</title>
        <authorList>
            <person name="Totoki Y."/>
            <person name="Seki M."/>
            <person name="Ishida J."/>
            <person name="Nakajima M."/>
            <person name="Enju A."/>
            <person name="Kamiya A."/>
            <person name="Narusaka M."/>
            <person name="Shin-i T."/>
            <person name="Nakagawa M."/>
            <person name="Sakamoto N."/>
            <person name="Oishi K."/>
            <person name="Kohara Y."/>
            <person name="Kobayashi M."/>
            <person name="Toyoda A."/>
            <person name="Sakaki Y."/>
            <person name="Sakurai T."/>
            <person name="Iida K."/>
            <person name="Akiyama K."/>
            <person name="Satou M."/>
            <person name="Toyoda T."/>
            <person name="Konagaya A."/>
            <person name="Carninci P."/>
            <person name="Kawai J."/>
            <person name="Hayashizaki Y."/>
            <person name="Shinozaki K."/>
        </authorList>
    </citation>
    <scope>NUCLEOTIDE SEQUENCE [LARGE SCALE MRNA]</scope>
    <source>
        <strain>cv. Columbia</strain>
    </source>
</reference>
<reference key="6">
    <citation type="journal article" date="2002" name="Plant Physiol.">
        <title>Inositol phospholipid metabolism in Arabidopsis. Characterized and putative isoforms of inositol phospholipid kinase and phosphoinositide-specific phospholipase C.</title>
        <authorList>
            <person name="Mueller-Roeber B."/>
            <person name="Pical C."/>
        </authorList>
    </citation>
    <scope>GENE FAMILY</scope>
    <scope>NOMENCLATURE</scope>
</reference>
<reference key="7">
    <citation type="journal article" date="2007" name="Plant Cell">
        <title>PIP5K9, an Arabidopsis phosphatidylinositol monophosphate kinase, interacts with a cytosolic invertase to negatively regulate sugar-mediated root growth.</title>
        <authorList>
            <person name="Lou Y."/>
            <person name="Gou J.Y."/>
            <person name="Xue H.W."/>
        </authorList>
    </citation>
    <scope>FUNCTION</scope>
    <scope>INTERACTION WITH CINV1</scope>
    <scope>TISSUE SPECIFICITY</scope>
    <scope>INDUCTION BY COLD</scope>
    <source>
        <strain>cv. Columbia</strain>
    </source>
</reference>